<proteinExistence type="inferred from homology"/>
<name>YCEH_ECOSM</name>
<feature type="chain" id="PRO_1000201241" description="UPF0502 protein YceH">
    <location>
        <begin position="1"/>
        <end position="215"/>
    </location>
</feature>
<feature type="modified residue" description="N6-acetyllysine" evidence="1">
    <location>
        <position position="80"/>
    </location>
</feature>
<evidence type="ECO:0000255" key="1">
    <source>
        <dbReference type="HAMAP-Rule" id="MF_01584"/>
    </source>
</evidence>
<comment type="similarity">
    <text evidence="1">Belongs to the UPF0502 family.</text>
</comment>
<gene>
    <name evidence="1" type="primary">yceH</name>
    <name type="ordered locus">EcSMS35_2062</name>
</gene>
<keyword id="KW-0007">Acetylation</keyword>
<dbReference type="EMBL" id="CP000970">
    <property type="protein sequence ID" value="ACB17905.1"/>
    <property type="molecule type" value="Genomic_DNA"/>
</dbReference>
<dbReference type="RefSeq" id="WP_000877109.1">
    <property type="nucleotide sequence ID" value="NC_010498.1"/>
</dbReference>
<dbReference type="SMR" id="B1LIU3"/>
<dbReference type="KEGG" id="ecm:EcSMS35_2062"/>
<dbReference type="HOGENOM" id="CLU_057831_2_0_6"/>
<dbReference type="Proteomes" id="UP000007011">
    <property type="component" value="Chromosome"/>
</dbReference>
<dbReference type="FunFam" id="1.10.10.10:FF:000196">
    <property type="entry name" value="UPF0502 protein YceH"/>
    <property type="match status" value="1"/>
</dbReference>
<dbReference type="FunFam" id="1.10.10.10:FF:000241">
    <property type="entry name" value="UPF0502 protein YceH"/>
    <property type="match status" value="1"/>
</dbReference>
<dbReference type="Gene3D" id="1.10.10.10">
    <property type="entry name" value="Winged helix-like DNA-binding domain superfamily/Winged helix DNA-binding domain"/>
    <property type="match status" value="2"/>
</dbReference>
<dbReference type="HAMAP" id="MF_01584">
    <property type="entry name" value="UPF0502"/>
    <property type="match status" value="1"/>
</dbReference>
<dbReference type="InterPro" id="IPR007432">
    <property type="entry name" value="DUF480"/>
</dbReference>
<dbReference type="InterPro" id="IPR036388">
    <property type="entry name" value="WH-like_DNA-bd_sf"/>
</dbReference>
<dbReference type="InterPro" id="IPR036390">
    <property type="entry name" value="WH_DNA-bd_sf"/>
</dbReference>
<dbReference type="NCBIfam" id="NF008413">
    <property type="entry name" value="PRK11239.1"/>
    <property type="match status" value="1"/>
</dbReference>
<dbReference type="PANTHER" id="PTHR38768">
    <property type="entry name" value="UPF0502 PROTEIN YCEH"/>
    <property type="match status" value="1"/>
</dbReference>
<dbReference type="PANTHER" id="PTHR38768:SF1">
    <property type="entry name" value="UPF0502 PROTEIN YCEH"/>
    <property type="match status" value="1"/>
</dbReference>
<dbReference type="Pfam" id="PF04337">
    <property type="entry name" value="DUF480"/>
    <property type="match status" value="1"/>
</dbReference>
<dbReference type="SUPFAM" id="SSF46785">
    <property type="entry name" value="Winged helix' DNA-binding domain"/>
    <property type="match status" value="2"/>
</dbReference>
<sequence>MKYQLTALEARVIGCLLEKQVTTPEQYPLSVNGVVTACNQKTNREPVMNLSESEVQEQLDNLVKRHYLRTVSGFGNRVTKYEQRFCNSEFGDLKLSAAEVALITTLLLRGAQTPGELRSRAARMYEFSDMAEVESTLEQLANREDGPFVVRLAREPGKRESRYMHLFSGEVEDQPAVMDMSNAVDGDLQARVEALEIEVAELKQRLDSLLAHLGD</sequence>
<accession>B1LIU3</accession>
<organism>
    <name type="scientific">Escherichia coli (strain SMS-3-5 / SECEC)</name>
    <dbReference type="NCBI Taxonomy" id="439855"/>
    <lineage>
        <taxon>Bacteria</taxon>
        <taxon>Pseudomonadati</taxon>
        <taxon>Pseudomonadota</taxon>
        <taxon>Gammaproteobacteria</taxon>
        <taxon>Enterobacterales</taxon>
        <taxon>Enterobacteriaceae</taxon>
        <taxon>Escherichia</taxon>
    </lineage>
</organism>
<protein>
    <recommendedName>
        <fullName evidence="1">UPF0502 protein YceH</fullName>
    </recommendedName>
</protein>
<reference key="1">
    <citation type="journal article" date="2008" name="J. Bacteriol.">
        <title>Insights into the environmental resistance gene pool from the genome sequence of the multidrug-resistant environmental isolate Escherichia coli SMS-3-5.</title>
        <authorList>
            <person name="Fricke W.F."/>
            <person name="Wright M.S."/>
            <person name="Lindell A.H."/>
            <person name="Harkins D.M."/>
            <person name="Baker-Austin C."/>
            <person name="Ravel J."/>
            <person name="Stepanauskas R."/>
        </authorList>
    </citation>
    <scope>NUCLEOTIDE SEQUENCE [LARGE SCALE GENOMIC DNA]</scope>
    <source>
        <strain>SMS-3-5 / SECEC</strain>
    </source>
</reference>